<evidence type="ECO:0000255" key="1">
    <source>
        <dbReference type="HAMAP-Rule" id="MF_01300"/>
    </source>
</evidence>
<evidence type="ECO:0000256" key="2">
    <source>
        <dbReference type="SAM" id="MobiDB-lite"/>
    </source>
</evidence>
<organism>
    <name type="scientific">Anaeromyxobacter sp. (strain K)</name>
    <dbReference type="NCBI Taxonomy" id="447217"/>
    <lineage>
        <taxon>Bacteria</taxon>
        <taxon>Pseudomonadati</taxon>
        <taxon>Myxococcota</taxon>
        <taxon>Myxococcia</taxon>
        <taxon>Myxococcales</taxon>
        <taxon>Cystobacterineae</taxon>
        <taxon>Anaeromyxobacteraceae</taxon>
        <taxon>Anaeromyxobacter</taxon>
    </lineage>
</organism>
<proteinExistence type="inferred from homology"/>
<name>DCTA_ANASK</name>
<keyword id="KW-0997">Cell inner membrane</keyword>
<keyword id="KW-1003">Cell membrane</keyword>
<keyword id="KW-0472">Membrane</keyword>
<keyword id="KW-0769">Symport</keyword>
<keyword id="KW-0812">Transmembrane</keyword>
<keyword id="KW-1133">Transmembrane helix</keyword>
<keyword id="KW-0813">Transport</keyword>
<reference key="1">
    <citation type="submission" date="2008-08" db="EMBL/GenBank/DDBJ databases">
        <title>Complete sequence of Anaeromyxobacter sp. K.</title>
        <authorList>
            <consortium name="US DOE Joint Genome Institute"/>
            <person name="Lucas S."/>
            <person name="Copeland A."/>
            <person name="Lapidus A."/>
            <person name="Glavina del Rio T."/>
            <person name="Dalin E."/>
            <person name="Tice H."/>
            <person name="Bruce D."/>
            <person name="Goodwin L."/>
            <person name="Pitluck S."/>
            <person name="Saunders E."/>
            <person name="Brettin T."/>
            <person name="Detter J.C."/>
            <person name="Han C."/>
            <person name="Larimer F."/>
            <person name="Land M."/>
            <person name="Hauser L."/>
            <person name="Kyrpides N."/>
            <person name="Ovchinnikiva G."/>
            <person name="Beliaev A."/>
        </authorList>
    </citation>
    <scope>NUCLEOTIDE SEQUENCE [LARGE SCALE GENOMIC DNA]</scope>
    <source>
        <strain>K</strain>
    </source>
</reference>
<sequence>MKRLARSLYLQVLLAVVLGALVGHLFPATGASLKPLGDGFIKLVKMLIAPIVFATVVTGIAKMGDLRKVGRVGLKGLLYFEVLTTVALAIGLVVARLARPGAGMNVDPATLDTKAIASYTNGAQAHGTVDFLMNVIPRDVADAFARGDILQVLLFSVLFGAALAALKDKGRPVLEFVDGLSLVLFRIVGFVMRLAPVGAFGAMAFTVGKYGIATLLSLGKLIACFYATSALFVVLMLGLVLRWCGLSLFRFLRYIKEEIFVVLGTSSSESALPLMMRKMEKLGCSKPVVGLVVPMGYSFNLDGTSIYLTLATLFIAQATNTHVTLVQELEILAVLLLTSKGAAAVTGGGFITLAATLSAVGNIPVAGLALLLGVDRFMSEARAITNLIGNGVASVAVSRWEGELDQARARAVLAGTVPEEVEPANEPEPPAIPAGAGLHG</sequence>
<accession>B4UMI5</accession>
<feature type="chain" id="PRO_1000140443" description="C4-dicarboxylate transport protein">
    <location>
        <begin position="1"/>
        <end position="440"/>
    </location>
</feature>
<feature type="transmembrane region" description="Helical" evidence="1">
    <location>
        <begin position="8"/>
        <end position="28"/>
    </location>
</feature>
<feature type="transmembrane region" description="Helical" evidence="1">
    <location>
        <begin position="40"/>
        <end position="60"/>
    </location>
</feature>
<feature type="transmembrane region" description="Helical" evidence="1">
    <location>
        <begin position="74"/>
        <end position="94"/>
    </location>
</feature>
<feature type="transmembrane region" description="Helical" evidence="1">
    <location>
        <begin position="147"/>
        <end position="167"/>
    </location>
</feature>
<feature type="transmembrane region" description="Helical" evidence="1">
    <location>
        <begin position="187"/>
        <end position="207"/>
    </location>
</feature>
<feature type="transmembrane region" description="Helical" evidence="1">
    <location>
        <begin position="221"/>
        <end position="241"/>
    </location>
</feature>
<feature type="transmembrane region" description="Helical" evidence="1">
    <location>
        <begin position="288"/>
        <end position="308"/>
    </location>
</feature>
<feature type="transmembrane region" description="Helical" evidence="1">
    <location>
        <begin position="354"/>
        <end position="374"/>
    </location>
</feature>
<feature type="region of interest" description="Disordered" evidence="2">
    <location>
        <begin position="419"/>
        <end position="440"/>
    </location>
</feature>
<dbReference type="EMBL" id="CP001131">
    <property type="protein sequence ID" value="ACG73006.1"/>
    <property type="molecule type" value="Genomic_DNA"/>
</dbReference>
<dbReference type="RefSeq" id="WP_012525822.1">
    <property type="nucleotide sequence ID" value="NC_011145.1"/>
</dbReference>
<dbReference type="SMR" id="B4UMI5"/>
<dbReference type="KEGG" id="ank:AnaeK_1777"/>
<dbReference type="HOGENOM" id="CLU_019375_7_0_7"/>
<dbReference type="OrthoDB" id="9766690at2"/>
<dbReference type="Proteomes" id="UP000001871">
    <property type="component" value="Chromosome"/>
</dbReference>
<dbReference type="GO" id="GO:0005886">
    <property type="term" value="C:plasma membrane"/>
    <property type="evidence" value="ECO:0007669"/>
    <property type="project" value="UniProtKB-SubCell"/>
</dbReference>
<dbReference type="GO" id="GO:0015138">
    <property type="term" value="F:fumarate transmembrane transporter activity"/>
    <property type="evidence" value="ECO:0007669"/>
    <property type="project" value="TreeGrafter"/>
</dbReference>
<dbReference type="GO" id="GO:0015366">
    <property type="term" value="F:malate:proton symporter activity"/>
    <property type="evidence" value="ECO:0007669"/>
    <property type="project" value="TreeGrafter"/>
</dbReference>
<dbReference type="GO" id="GO:0015141">
    <property type="term" value="F:succinate transmembrane transporter activity"/>
    <property type="evidence" value="ECO:0007669"/>
    <property type="project" value="TreeGrafter"/>
</dbReference>
<dbReference type="GO" id="GO:0070778">
    <property type="term" value="P:L-aspartate transmembrane transport"/>
    <property type="evidence" value="ECO:0007669"/>
    <property type="project" value="TreeGrafter"/>
</dbReference>
<dbReference type="FunFam" id="1.10.3860.10:FF:000001">
    <property type="entry name" value="C4-dicarboxylate transport protein"/>
    <property type="match status" value="1"/>
</dbReference>
<dbReference type="Gene3D" id="1.10.3860.10">
    <property type="entry name" value="Sodium:dicarboxylate symporter"/>
    <property type="match status" value="1"/>
</dbReference>
<dbReference type="HAMAP" id="MF_01300">
    <property type="entry name" value="C4_dicarb_transport"/>
    <property type="match status" value="1"/>
</dbReference>
<dbReference type="InterPro" id="IPR023954">
    <property type="entry name" value="C4_dicarb_transport"/>
</dbReference>
<dbReference type="InterPro" id="IPR001991">
    <property type="entry name" value="Na-dicarboxylate_symporter"/>
</dbReference>
<dbReference type="InterPro" id="IPR018107">
    <property type="entry name" value="Na-dicarboxylate_symporter_CS"/>
</dbReference>
<dbReference type="InterPro" id="IPR036458">
    <property type="entry name" value="Na:dicarbo_symporter_sf"/>
</dbReference>
<dbReference type="NCBIfam" id="NF002461">
    <property type="entry name" value="PRK01663.1"/>
    <property type="match status" value="1"/>
</dbReference>
<dbReference type="NCBIfam" id="NF009587">
    <property type="entry name" value="PRK13027.1"/>
    <property type="match status" value="1"/>
</dbReference>
<dbReference type="PANTHER" id="PTHR42865:SF1">
    <property type="entry name" value="AEROBIC C4-DICARBOXYLATE TRANSPORT PROTEIN"/>
    <property type="match status" value="1"/>
</dbReference>
<dbReference type="PANTHER" id="PTHR42865">
    <property type="entry name" value="PROTON/GLUTAMATE-ASPARTATE SYMPORTER"/>
    <property type="match status" value="1"/>
</dbReference>
<dbReference type="Pfam" id="PF00375">
    <property type="entry name" value="SDF"/>
    <property type="match status" value="1"/>
</dbReference>
<dbReference type="PRINTS" id="PR00173">
    <property type="entry name" value="EDTRNSPORT"/>
</dbReference>
<dbReference type="SUPFAM" id="SSF118215">
    <property type="entry name" value="Proton glutamate symport protein"/>
    <property type="match status" value="1"/>
</dbReference>
<dbReference type="PROSITE" id="PS00713">
    <property type="entry name" value="NA_DICARBOXYL_SYMP_1"/>
    <property type="match status" value="1"/>
</dbReference>
<dbReference type="PROSITE" id="PS00714">
    <property type="entry name" value="NA_DICARBOXYL_SYMP_2"/>
    <property type="match status" value="1"/>
</dbReference>
<comment type="function">
    <text evidence="1">Responsible for the transport of dicarboxylates such as succinate, fumarate, and malate from the periplasm across the membrane.</text>
</comment>
<comment type="subcellular location">
    <subcellularLocation>
        <location evidence="1">Cell inner membrane</location>
        <topology evidence="1">Multi-pass membrane protein</topology>
    </subcellularLocation>
</comment>
<comment type="similarity">
    <text evidence="1">Belongs to the dicarboxylate/amino acid:cation symporter (DAACS) (TC 2.A.23) family.</text>
</comment>
<protein>
    <recommendedName>
        <fullName evidence="1">C4-dicarboxylate transport protein</fullName>
    </recommendedName>
</protein>
<gene>
    <name evidence="1" type="primary">dctA</name>
    <name type="ordered locus">AnaeK_1777</name>
</gene>